<dbReference type="EC" id="2.1.1.-" evidence="1"/>
<dbReference type="EMBL" id="X62539">
    <property type="protein sequence ID" value="CAA44405.1"/>
    <property type="molecule type" value="Genomic_DNA"/>
</dbReference>
<dbReference type="EMBL" id="D26185">
    <property type="protein sequence ID" value="BAA05230.1"/>
    <property type="molecule type" value="Genomic_DNA"/>
</dbReference>
<dbReference type="EMBL" id="AL009126">
    <property type="protein sequence ID" value="CAB16137.1"/>
    <property type="molecule type" value="Genomic_DNA"/>
</dbReference>
<dbReference type="PIR" id="I40441">
    <property type="entry name" value="BWBSGB"/>
</dbReference>
<dbReference type="RefSeq" id="NP_391980.1">
    <property type="nucleotide sequence ID" value="NC_000964.3"/>
</dbReference>
<dbReference type="RefSeq" id="WP_003243029.1">
    <property type="nucleotide sequence ID" value="NZ_OZ025638.1"/>
</dbReference>
<dbReference type="PDB" id="1XDZ">
    <property type="method" value="X-ray"/>
    <property type="resolution" value="1.60 A"/>
    <property type="chains" value="A=1-239"/>
</dbReference>
<dbReference type="PDBsum" id="1XDZ"/>
<dbReference type="SMR" id="P25813"/>
<dbReference type="FunCoup" id="P25813">
    <property type="interactions" value="500"/>
</dbReference>
<dbReference type="STRING" id="224308.BSU41000"/>
<dbReference type="PaxDb" id="224308-BSU41000"/>
<dbReference type="DNASU" id="937931"/>
<dbReference type="EnsemblBacteria" id="CAB16137">
    <property type="protein sequence ID" value="CAB16137"/>
    <property type="gene ID" value="BSU_41000"/>
</dbReference>
<dbReference type="GeneID" id="937931"/>
<dbReference type="KEGG" id="bsu:BSU41000"/>
<dbReference type="PATRIC" id="fig|224308.179.peg.4442"/>
<dbReference type="eggNOG" id="COG0357">
    <property type="taxonomic scope" value="Bacteria"/>
</dbReference>
<dbReference type="InParanoid" id="P25813"/>
<dbReference type="OrthoDB" id="9808773at2"/>
<dbReference type="PhylomeDB" id="P25813"/>
<dbReference type="BioCyc" id="BSUB:BSU41000-MONOMER"/>
<dbReference type="EvolutionaryTrace" id="P25813"/>
<dbReference type="Proteomes" id="UP000001570">
    <property type="component" value="Chromosome"/>
</dbReference>
<dbReference type="GO" id="GO:0005829">
    <property type="term" value="C:cytosol"/>
    <property type="evidence" value="ECO:0000318"/>
    <property type="project" value="GO_Central"/>
</dbReference>
<dbReference type="GO" id="GO:0070043">
    <property type="term" value="F:rRNA (guanine-N7-)-methyltransferase activity"/>
    <property type="evidence" value="ECO:0000318"/>
    <property type="project" value="GO_Central"/>
</dbReference>
<dbReference type="CDD" id="cd02440">
    <property type="entry name" value="AdoMet_MTases"/>
    <property type="match status" value="1"/>
</dbReference>
<dbReference type="FunFam" id="3.40.50.150:FF:000041">
    <property type="entry name" value="Ribosomal RNA small subunit methyltransferase G"/>
    <property type="match status" value="1"/>
</dbReference>
<dbReference type="Gene3D" id="3.40.50.150">
    <property type="entry name" value="Vaccinia Virus protein VP39"/>
    <property type="match status" value="1"/>
</dbReference>
<dbReference type="HAMAP" id="MF_00074">
    <property type="entry name" value="16SrRNA_methyltr_G"/>
    <property type="match status" value="1"/>
</dbReference>
<dbReference type="InterPro" id="IPR003682">
    <property type="entry name" value="rRNA_ssu_MeTfrase_G"/>
</dbReference>
<dbReference type="InterPro" id="IPR029063">
    <property type="entry name" value="SAM-dependent_MTases_sf"/>
</dbReference>
<dbReference type="NCBIfam" id="TIGR00138">
    <property type="entry name" value="rsmG_gidB"/>
    <property type="match status" value="1"/>
</dbReference>
<dbReference type="PANTHER" id="PTHR31760">
    <property type="entry name" value="S-ADENOSYL-L-METHIONINE-DEPENDENT METHYLTRANSFERASES SUPERFAMILY PROTEIN"/>
    <property type="match status" value="1"/>
</dbReference>
<dbReference type="PANTHER" id="PTHR31760:SF0">
    <property type="entry name" value="S-ADENOSYL-L-METHIONINE-DEPENDENT METHYLTRANSFERASES SUPERFAMILY PROTEIN"/>
    <property type="match status" value="1"/>
</dbReference>
<dbReference type="Pfam" id="PF02527">
    <property type="entry name" value="GidB"/>
    <property type="match status" value="1"/>
</dbReference>
<dbReference type="PIRSF" id="PIRSF003078">
    <property type="entry name" value="GidB"/>
    <property type="match status" value="1"/>
</dbReference>
<dbReference type="SUPFAM" id="SSF53335">
    <property type="entry name" value="S-adenosyl-L-methionine-dependent methyltransferases"/>
    <property type="match status" value="1"/>
</dbReference>
<proteinExistence type="evidence at protein level"/>
<comment type="function">
    <text evidence="1 3">Specifically methylates the N7 position of guanine in position 535 of 16S rRNA.</text>
</comment>
<comment type="subcellular location">
    <subcellularLocation>
        <location evidence="1">Cytoplasm</location>
    </subcellularLocation>
</comment>
<comment type="disruption phenotype">
    <text evidence="3">Low-level streptomycin resistance.</text>
</comment>
<comment type="similarity">
    <text evidence="1">Belongs to the methyltransferase superfamily. RNA methyltransferase RsmG family.</text>
</comment>
<organism>
    <name type="scientific">Bacillus subtilis (strain 168)</name>
    <dbReference type="NCBI Taxonomy" id="224308"/>
    <lineage>
        <taxon>Bacteria</taxon>
        <taxon>Bacillati</taxon>
        <taxon>Bacillota</taxon>
        <taxon>Bacilli</taxon>
        <taxon>Bacillales</taxon>
        <taxon>Bacillaceae</taxon>
        <taxon>Bacillus</taxon>
    </lineage>
</organism>
<evidence type="ECO:0000255" key="1">
    <source>
        <dbReference type="HAMAP-Rule" id="MF_00074"/>
    </source>
</evidence>
<evidence type="ECO:0000256" key="2">
    <source>
        <dbReference type="SAM" id="MobiDB-lite"/>
    </source>
</evidence>
<evidence type="ECO:0000269" key="3">
    <source>
    </source>
</evidence>
<evidence type="ECO:0007829" key="4">
    <source>
        <dbReference type="PDB" id="1XDZ"/>
    </source>
</evidence>
<feature type="chain" id="PRO_0000184215" description="Ribosomal RNA small subunit methyltransferase G">
    <location>
        <begin position="1"/>
        <end position="239"/>
    </location>
</feature>
<feature type="region of interest" description="Disordered" evidence="2">
    <location>
        <begin position="219"/>
        <end position="239"/>
    </location>
</feature>
<feature type="binding site" evidence="1">
    <location>
        <position position="77"/>
    </location>
    <ligand>
        <name>S-adenosyl-L-methionine</name>
        <dbReference type="ChEBI" id="CHEBI:59789"/>
    </ligand>
</feature>
<feature type="binding site" evidence="1">
    <location>
        <position position="82"/>
    </location>
    <ligand>
        <name>S-adenosyl-L-methionine</name>
        <dbReference type="ChEBI" id="CHEBI:59789"/>
    </ligand>
</feature>
<feature type="binding site" evidence="1">
    <location>
        <begin position="128"/>
        <end position="129"/>
    </location>
    <ligand>
        <name>S-adenosyl-L-methionine</name>
        <dbReference type="ChEBI" id="CHEBI:59789"/>
    </ligand>
</feature>
<feature type="binding site" evidence="1">
    <location>
        <position position="147"/>
    </location>
    <ligand>
        <name>S-adenosyl-L-methionine</name>
        <dbReference type="ChEBI" id="CHEBI:59789"/>
    </ligand>
</feature>
<feature type="helix" evidence="4">
    <location>
        <begin position="3"/>
        <end position="12"/>
    </location>
</feature>
<feature type="helix" evidence="4">
    <location>
        <begin position="19"/>
        <end position="38"/>
    </location>
</feature>
<feature type="helix" evidence="4">
    <location>
        <begin position="47"/>
        <end position="53"/>
    </location>
</feature>
<feature type="helix" evidence="4">
    <location>
        <begin position="55"/>
        <end position="59"/>
    </location>
</feature>
<feature type="helix" evidence="4">
    <location>
        <begin position="60"/>
        <end position="63"/>
    </location>
</feature>
<feature type="helix" evidence="4">
    <location>
        <begin position="67"/>
        <end position="69"/>
    </location>
</feature>
<feature type="strand" evidence="4">
    <location>
        <begin position="72"/>
        <end position="76"/>
    </location>
</feature>
<feature type="strand" evidence="4">
    <location>
        <begin position="78"/>
        <end position="80"/>
    </location>
</feature>
<feature type="helix" evidence="4">
    <location>
        <begin position="84"/>
        <end position="90"/>
    </location>
</feature>
<feature type="strand" evidence="4">
    <location>
        <begin position="95"/>
        <end position="101"/>
    </location>
</feature>
<feature type="helix" evidence="4">
    <location>
        <begin position="103"/>
        <end position="116"/>
    </location>
</feature>
<feature type="strand" evidence="4">
    <location>
        <begin position="119"/>
        <end position="126"/>
    </location>
</feature>
<feature type="helix" evidence="4">
    <location>
        <begin position="128"/>
        <end position="131"/>
    </location>
</feature>
<feature type="turn" evidence="4">
    <location>
        <begin position="135"/>
        <end position="139"/>
    </location>
</feature>
<feature type="strand" evidence="4">
    <location>
        <begin position="141"/>
        <end position="147"/>
    </location>
</feature>
<feature type="helix" evidence="4">
    <location>
        <begin position="152"/>
        <end position="159"/>
    </location>
</feature>
<feature type="helix" evidence="4">
    <location>
        <begin position="160"/>
        <end position="162"/>
    </location>
</feature>
<feature type="strand" evidence="4">
    <location>
        <begin position="163"/>
        <end position="173"/>
    </location>
</feature>
<feature type="helix" evidence="4">
    <location>
        <begin position="178"/>
        <end position="190"/>
    </location>
</feature>
<feature type="strand" evidence="4">
    <location>
        <begin position="193"/>
        <end position="202"/>
    </location>
</feature>
<feature type="turn" evidence="4">
    <location>
        <begin position="204"/>
        <end position="206"/>
    </location>
</feature>
<feature type="strand" evidence="4">
    <location>
        <begin position="209"/>
        <end position="217"/>
    </location>
</feature>
<feature type="helix" evidence="4">
    <location>
        <begin position="231"/>
        <end position="234"/>
    </location>
</feature>
<reference key="1">
    <citation type="journal article" date="1992" name="Mol. Microbiol.">
        <title>Genes and their organization in the replication origin region of the bacterial chromosome.</title>
        <authorList>
            <person name="Ogasawara N."/>
            <person name="Yoshikawa H."/>
        </authorList>
    </citation>
    <scope>NUCLEOTIDE SEQUENCE [GENOMIC DNA]</scope>
    <source>
        <strain>168 / CRK2000</strain>
    </source>
</reference>
<reference key="2">
    <citation type="journal article" date="1994" name="DNA Res.">
        <title>Systematic sequencing of the 180 kilobase region of the Bacillus subtilis chromosome containing the replication origin.</title>
        <authorList>
            <person name="Ogasawara N."/>
            <person name="Nakai S."/>
            <person name="Yoshikawa H."/>
        </authorList>
    </citation>
    <scope>NUCLEOTIDE SEQUENCE [GENOMIC DNA]</scope>
    <source>
        <strain>168</strain>
    </source>
</reference>
<reference key="3">
    <citation type="journal article" date="1997" name="Nature">
        <title>The complete genome sequence of the Gram-positive bacterium Bacillus subtilis.</title>
        <authorList>
            <person name="Kunst F."/>
            <person name="Ogasawara N."/>
            <person name="Moszer I."/>
            <person name="Albertini A.M."/>
            <person name="Alloni G."/>
            <person name="Azevedo V."/>
            <person name="Bertero M.G."/>
            <person name="Bessieres P."/>
            <person name="Bolotin A."/>
            <person name="Borchert S."/>
            <person name="Borriss R."/>
            <person name="Boursier L."/>
            <person name="Brans A."/>
            <person name="Braun M."/>
            <person name="Brignell S.C."/>
            <person name="Bron S."/>
            <person name="Brouillet S."/>
            <person name="Bruschi C.V."/>
            <person name="Caldwell B."/>
            <person name="Capuano V."/>
            <person name="Carter N.M."/>
            <person name="Choi S.-K."/>
            <person name="Codani J.-J."/>
            <person name="Connerton I.F."/>
            <person name="Cummings N.J."/>
            <person name="Daniel R.A."/>
            <person name="Denizot F."/>
            <person name="Devine K.M."/>
            <person name="Duesterhoeft A."/>
            <person name="Ehrlich S.D."/>
            <person name="Emmerson P.T."/>
            <person name="Entian K.-D."/>
            <person name="Errington J."/>
            <person name="Fabret C."/>
            <person name="Ferrari E."/>
            <person name="Foulger D."/>
            <person name="Fritz C."/>
            <person name="Fujita M."/>
            <person name="Fujita Y."/>
            <person name="Fuma S."/>
            <person name="Galizzi A."/>
            <person name="Galleron N."/>
            <person name="Ghim S.-Y."/>
            <person name="Glaser P."/>
            <person name="Goffeau A."/>
            <person name="Golightly E.J."/>
            <person name="Grandi G."/>
            <person name="Guiseppi G."/>
            <person name="Guy B.J."/>
            <person name="Haga K."/>
            <person name="Haiech J."/>
            <person name="Harwood C.R."/>
            <person name="Henaut A."/>
            <person name="Hilbert H."/>
            <person name="Holsappel S."/>
            <person name="Hosono S."/>
            <person name="Hullo M.-F."/>
            <person name="Itaya M."/>
            <person name="Jones L.-M."/>
            <person name="Joris B."/>
            <person name="Karamata D."/>
            <person name="Kasahara Y."/>
            <person name="Klaerr-Blanchard M."/>
            <person name="Klein C."/>
            <person name="Kobayashi Y."/>
            <person name="Koetter P."/>
            <person name="Koningstein G."/>
            <person name="Krogh S."/>
            <person name="Kumano M."/>
            <person name="Kurita K."/>
            <person name="Lapidus A."/>
            <person name="Lardinois S."/>
            <person name="Lauber J."/>
            <person name="Lazarevic V."/>
            <person name="Lee S.-M."/>
            <person name="Levine A."/>
            <person name="Liu H."/>
            <person name="Masuda S."/>
            <person name="Mauel C."/>
            <person name="Medigue C."/>
            <person name="Medina N."/>
            <person name="Mellado R.P."/>
            <person name="Mizuno M."/>
            <person name="Moestl D."/>
            <person name="Nakai S."/>
            <person name="Noback M."/>
            <person name="Noone D."/>
            <person name="O'Reilly M."/>
            <person name="Ogawa K."/>
            <person name="Ogiwara A."/>
            <person name="Oudega B."/>
            <person name="Park S.-H."/>
            <person name="Parro V."/>
            <person name="Pohl T.M."/>
            <person name="Portetelle D."/>
            <person name="Porwollik S."/>
            <person name="Prescott A.M."/>
            <person name="Presecan E."/>
            <person name="Pujic P."/>
            <person name="Purnelle B."/>
            <person name="Rapoport G."/>
            <person name="Rey M."/>
            <person name="Reynolds S."/>
            <person name="Rieger M."/>
            <person name="Rivolta C."/>
            <person name="Rocha E."/>
            <person name="Roche B."/>
            <person name="Rose M."/>
            <person name="Sadaie Y."/>
            <person name="Sato T."/>
            <person name="Scanlan E."/>
            <person name="Schleich S."/>
            <person name="Schroeter R."/>
            <person name="Scoffone F."/>
            <person name="Sekiguchi J."/>
            <person name="Sekowska A."/>
            <person name="Seror S.J."/>
            <person name="Serror P."/>
            <person name="Shin B.-S."/>
            <person name="Soldo B."/>
            <person name="Sorokin A."/>
            <person name="Tacconi E."/>
            <person name="Takagi T."/>
            <person name="Takahashi H."/>
            <person name="Takemaru K."/>
            <person name="Takeuchi M."/>
            <person name="Tamakoshi A."/>
            <person name="Tanaka T."/>
            <person name="Terpstra P."/>
            <person name="Tognoni A."/>
            <person name="Tosato V."/>
            <person name="Uchiyama S."/>
            <person name="Vandenbol M."/>
            <person name="Vannier F."/>
            <person name="Vassarotti A."/>
            <person name="Viari A."/>
            <person name="Wambutt R."/>
            <person name="Wedler E."/>
            <person name="Wedler H."/>
            <person name="Weitzenegger T."/>
            <person name="Winters P."/>
            <person name="Wipat A."/>
            <person name="Yamamoto H."/>
            <person name="Yamane K."/>
            <person name="Yasumoto K."/>
            <person name="Yata K."/>
            <person name="Yoshida K."/>
            <person name="Yoshikawa H.-F."/>
            <person name="Zumstein E."/>
            <person name="Yoshikawa H."/>
            <person name="Danchin A."/>
        </authorList>
    </citation>
    <scope>NUCLEOTIDE SEQUENCE [LARGE SCALE GENOMIC DNA]</scope>
    <source>
        <strain>168</strain>
    </source>
</reference>
<reference key="4">
    <citation type="journal article" date="2007" name="J. Bacteriol.">
        <title>Identification of the RsmG methyltransferase target as 16S rRNA nucleotide G527 and characterization of Bacillus subtilis rsmG mutants.</title>
        <authorList>
            <person name="Nishimura K."/>
            <person name="Johansen S.K."/>
            <person name="Inaoka T."/>
            <person name="Hosaka T."/>
            <person name="Tokuyama S."/>
            <person name="Tahara Y."/>
            <person name="Okamoto S."/>
            <person name="Kawamura F."/>
            <person name="Douthwaite S."/>
            <person name="Ochi K."/>
        </authorList>
    </citation>
    <scope>FUNCTION</scope>
    <scope>DISRUPTION PHENOTYPE</scope>
    <source>
        <strain>168</strain>
    </source>
</reference>
<reference key="5">
    <citation type="submission" date="2005-01" db="PDB data bank">
        <title>The 1.6 A crystal structure of Gram-positive Bacillus subtilis glucose inhibited division protein b (gidB).</title>
        <authorList>
            <consortium name="Midwest center for structural genomics (MCSG)"/>
        </authorList>
    </citation>
    <scope>X-RAY CRYSTALLOGRAPHY (1.6 ANGSTROMS)</scope>
</reference>
<sequence>MNIEEFTSGLAEKGISLSPRQLEQFELYYDMLVEWNEKINLTSITEKKEVYLKHFYDSITAAFYVDFNQVNTICDVGAGAGFPSLPIKICFPHLHVTIVDSLNKRITFLEKLSEALQLENTTFCHDRAETFGQRKDVRESYDIVTARAVARLSVLSELCLPLVKKNGLFVALKAASAEEELNAGKKAITTLGGELENIHSFKLPIEESDRNIMVIRKIKNTPKKYPRKPGTPNKSPIEG</sequence>
<protein>
    <recommendedName>
        <fullName evidence="1">Ribosomal RNA small subunit methyltransferase G</fullName>
        <ecNumber evidence="1">2.1.1.-</ecNumber>
    </recommendedName>
    <alternativeName>
        <fullName evidence="1">16S rRNA 7-methylguanosine methyltransferase</fullName>
        <shortName evidence="1">16S rRNA m7G methyltransferase</shortName>
    </alternativeName>
    <alternativeName>
        <fullName>Glucose-inhibited division protein B</fullName>
    </alternativeName>
</protein>
<keyword id="KW-0002">3D-structure</keyword>
<keyword id="KW-0963">Cytoplasm</keyword>
<keyword id="KW-0489">Methyltransferase</keyword>
<keyword id="KW-1185">Reference proteome</keyword>
<keyword id="KW-0698">rRNA processing</keyword>
<keyword id="KW-0949">S-adenosyl-L-methionine</keyword>
<keyword id="KW-0808">Transferase</keyword>
<name>RSMG_BACSU</name>
<accession>P25813</accession>
<gene>
    <name evidence="1" type="primary">rsmG</name>
    <name type="synonym">gidB</name>
    <name type="ordered locus">BSU41000</name>
</gene>